<reference key="1">
    <citation type="journal article" date="1998" name="Science">
        <title>Genome sequence of the nematode C. elegans: a platform for investigating biology.</title>
        <authorList>
            <consortium name="The C. elegans sequencing consortium"/>
        </authorList>
    </citation>
    <scope>NUCLEOTIDE SEQUENCE [LARGE SCALE GENOMIC DNA]</scope>
    <source>
        <strain>Bristol N2</strain>
    </source>
</reference>
<reference key="2">
    <citation type="journal article" date="2020" name="Cell Rep.">
        <title>Ribosome 18S m6A methyltransferase METTL5 promotes translation initiation and breast cancer cell growth.</title>
        <authorList>
            <person name="Rong B."/>
            <person name="Zhang Q."/>
            <person name="Wan J."/>
            <person name="Xing S."/>
            <person name="Dai R."/>
            <person name="Li Y."/>
            <person name="Cai J."/>
            <person name="Xie J."/>
            <person name="Song Y."/>
            <person name="Chen J."/>
            <person name="Zhang L."/>
            <person name="Yan G."/>
            <person name="Zhang W."/>
            <person name="Gao H."/>
            <person name="Han J.J."/>
            <person name="Qu Q."/>
            <person name="Ma H."/>
            <person name="Tian Y."/>
            <person name="Lan F."/>
        </authorList>
    </citation>
    <scope>FUNCTION</scope>
    <scope>CATALYTIC ACTIVITY</scope>
    <scope>DISRUPTION PHENOTYPE</scope>
</reference>
<name>METL5_CAEEL</name>
<protein>
    <recommendedName>
        <fullName>rRNA N(6)-adenosine-methyltransferase metl-5</fullName>
        <ecNumber evidence="5">2.1.1.-</ecNumber>
    </recommendedName>
    <alternativeName>
        <fullName evidence="4">Methyltransferase-like protein 5</fullName>
    </alternativeName>
</protein>
<organism>
    <name type="scientific">Caenorhabditis elegans</name>
    <dbReference type="NCBI Taxonomy" id="6239"/>
    <lineage>
        <taxon>Eukaryota</taxon>
        <taxon>Metazoa</taxon>
        <taxon>Ecdysozoa</taxon>
        <taxon>Nematoda</taxon>
        <taxon>Chromadorea</taxon>
        <taxon>Rhabditida</taxon>
        <taxon>Rhabditina</taxon>
        <taxon>Rhabditomorpha</taxon>
        <taxon>Rhabditoidea</taxon>
        <taxon>Rhabditidae</taxon>
        <taxon>Peloderinae</taxon>
        <taxon>Caenorhabditis</taxon>
    </lineage>
</organism>
<comment type="function">
    <text evidence="2">Catalytic subunit of a heterodimer with TRMT112/C04H5.1, which specifically methylates the 6th position of adenine in position 1717 of 18S rRNA.</text>
</comment>
<comment type="catalytic activity">
    <reaction evidence="5">
        <text>adenosine in rRNA + S-adenosyl-L-methionine = N(6)-methyladenosine in rRNA + S-adenosyl-L-homocysteine + H(+)</text>
        <dbReference type="Rhea" id="RHEA:58728"/>
        <dbReference type="Rhea" id="RHEA-COMP:15198"/>
        <dbReference type="Rhea" id="RHEA-COMP:15199"/>
        <dbReference type="ChEBI" id="CHEBI:15378"/>
        <dbReference type="ChEBI" id="CHEBI:57856"/>
        <dbReference type="ChEBI" id="CHEBI:59789"/>
        <dbReference type="ChEBI" id="CHEBI:74411"/>
        <dbReference type="ChEBI" id="CHEBI:74449"/>
    </reaction>
    <physiologicalReaction direction="left-to-right" evidence="5">
        <dbReference type="Rhea" id="RHEA:58729"/>
    </physiologicalReaction>
</comment>
<comment type="subunit">
    <text evidence="1">Heterodimer; heterodimerizes with TRMT112/C04H5.1.</text>
</comment>
<comment type="disruption phenotype">
    <text evidence="2">Worms are viable and do not display obvious developmental defects; they however exhibit significantly longer lifespan and heat resistance (PubMed:33357433). Cells show reduced N6-methylation of adenine(1717) in 18S rRNA (PubMed:33357433).</text>
</comment>
<comment type="similarity">
    <text evidence="4">Belongs to the methyltransferase superfamily. PrmA family.</text>
</comment>
<keyword id="KW-0489">Methyltransferase</keyword>
<keyword id="KW-1185">Reference proteome</keyword>
<keyword id="KW-0949">S-adenosyl-L-methionine</keyword>
<keyword id="KW-0808">Transferase</keyword>
<evidence type="ECO:0000250" key="1">
    <source>
        <dbReference type="UniProtKB" id="Q9NRN9"/>
    </source>
</evidence>
<evidence type="ECO:0000269" key="2">
    <source>
    </source>
</evidence>
<evidence type="ECO:0000303" key="3">
    <source>
    </source>
</evidence>
<evidence type="ECO:0000305" key="4"/>
<evidence type="ECO:0000305" key="5">
    <source>
    </source>
</evidence>
<evidence type="ECO:0000312" key="6">
    <source>
        <dbReference type="WormBase" id="C38D4.9"/>
    </source>
</evidence>
<feature type="chain" id="PRO_0000453465" description="rRNA N(6)-adenosine-methyltransferase metl-5">
    <location>
        <begin position="1"/>
        <end position="214"/>
    </location>
</feature>
<feature type="binding site" evidence="1">
    <location>
        <position position="25"/>
    </location>
    <ligand>
        <name>S-adenosyl-L-methionine</name>
        <dbReference type="ChEBI" id="CHEBI:59789"/>
    </ligand>
</feature>
<feature type="binding site" evidence="1">
    <location>
        <position position="28"/>
    </location>
    <ligand>
        <name>S-adenosyl-L-methionine</name>
        <dbReference type="ChEBI" id="CHEBI:59789"/>
    </ligand>
</feature>
<feature type="binding site" evidence="1">
    <location>
        <position position="55"/>
    </location>
    <ligand>
        <name>S-adenosyl-L-methionine</name>
        <dbReference type="ChEBI" id="CHEBI:59789"/>
    </ligand>
</feature>
<feature type="binding site" evidence="1">
    <location>
        <position position="58"/>
    </location>
    <ligand>
        <name>S-adenosyl-L-methionine</name>
        <dbReference type="ChEBI" id="CHEBI:59789"/>
    </ligand>
</feature>
<feature type="binding site" evidence="1">
    <location>
        <position position="78"/>
    </location>
    <ligand>
        <name>S-adenosyl-L-methionine</name>
        <dbReference type="ChEBI" id="CHEBI:59789"/>
    </ligand>
</feature>
<feature type="binding site" evidence="1">
    <location>
        <begin position="106"/>
        <end position="107"/>
    </location>
    <ligand>
        <name>S-adenosyl-L-methionine</name>
        <dbReference type="ChEBI" id="CHEBI:59789"/>
    </ligand>
</feature>
<proteinExistence type="evidence at protein level"/>
<accession>Q18511</accession>
<dbReference type="EC" id="2.1.1.-" evidence="5"/>
<dbReference type="EMBL" id="BX284603">
    <property type="protein sequence ID" value="CAA86320.1"/>
    <property type="molecule type" value="Genomic_DNA"/>
</dbReference>
<dbReference type="PIR" id="T19827">
    <property type="entry name" value="T19827"/>
</dbReference>
<dbReference type="RefSeq" id="NP_497990.1">
    <property type="nucleotide sequence ID" value="NM_065589.7"/>
</dbReference>
<dbReference type="SMR" id="Q18511"/>
<dbReference type="DIP" id="DIP-24672N"/>
<dbReference type="FunCoup" id="Q18511">
    <property type="interactions" value="1809"/>
</dbReference>
<dbReference type="IntAct" id="Q18511">
    <property type="interactions" value="1"/>
</dbReference>
<dbReference type="STRING" id="6239.C38D4.9.1"/>
<dbReference type="PaxDb" id="6239-C38D4.9"/>
<dbReference type="PeptideAtlas" id="Q18511"/>
<dbReference type="EnsemblMetazoa" id="C38D4.9.1">
    <property type="protein sequence ID" value="C38D4.9.1"/>
    <property type="gene ID" value="WBGene00008008"/>
</dbReference>
<dbReference type="GeneID" id="175637"/>
<dbReference type="KEGG" id="cel:CELE_C38D4.9"/>
<dbReference type="UCSC" id="C38D4.9">
    <property type="organism name" value="c. elegans"/>
</dbReference>
<dbReference type="AGR" id="WB:WBGene00008008"/>
<dbReference type="CTD" id="175637"/>
<dbReference type="WormBase" id="C38D4.9">
    <property type="protein sequence ID" value="CE00922"/>
    <property type="gene ID" value="WBGene00008008"/>
    <property type="gene designation" value="metl-5"/>
</dbReference>
<dbReference type="eggNOG" id="KOG3420">
    <property type="taxonomic scope" value="Eukaryota"/>
</dbReference>
<dbReference type="GeneTree" id="ENSGT00390000000227"/>
<dbReference type="HOGENOM" id="CLU_074702_1_1_1"/>
<dbReference type="InParanoid" id="Q18511"/>
<dbReference type="OMA" id="DVVYSIH"/>
<dbReference type="OrthoDB" id="419617at2759"/>
<dbReference type="PhylomeDB" id="Q18511"/>
<dbReference type="PRO" id="PR:Q18511"/>
<dbReference type="Proteomes" id="UP000001940">
    <property type="component" value="Chromosome III"/>
</dbReference>
<dbReference type="Bgee" id="WBGene00008008">
    <property type="expression patterns" value="Expressed in germ line (C elegans) and 4 other cell types or tissues"/>
</dbReference>
<dbReference type="GO" id="GO:0003676">
    <property type="term" value="F:nucleic acid binding"/>
    <property type="evidence" value="ECO:0007669"/>
    <property type="project" value="InterPro"/>
</dbReference>
<dbReference type="GO" id="GO:0008988">
    <property type="term" value="F:rRNA (adenine-N6-)-methyltransferase activity"/>
    <property type="evidence" value="ECO:0000314"/>
    <property type="project" value="WormBase"/>
</dbReference>
<dbReference type="GO" id="GO:0032056">
    <property type="term" value="P:positive regulation of translation in response to stress"/>
    <property type="evidence" value="ECO:0000315"/>
    <property type="project" value="WormBase"/>
</dbReference>
<dbReference type="GO" id="GO:0070475">
    <property type="term" value="P:rRNA base methylation"/>
    <property type="evidence" value="ECO:0000314"/>
    <property type="project" value="WormBase"/>
</dbReference>
<dbReference type="GO" id="GO:0031167">
    <property type="term" value="P:rRNA methylation"/>
    <property type="evidence" value="ECO:0000315"/>
    <property type="project" value="UniProtKB"/>
</dbReference>
<dbReference type="CDD" id="cd02440">
    <property type="entry name" value="AdoMet_MTases"/>
    <property type="match status" value="1"/>
</dbReference>
<dbReference type="Gene3D" id="3.40.50.150">
    <property type="entry name" value="Vaccinia Virus protein VP39"/>
    <property type="match status" value="1"/>
</dbReference>
<dbReference type="InterPro" id="IPR002052">
    <property type="entry name" value="DNA_methylase_N6_adenine_CS"/>
</dbReference>
<dbReference type="InterPro" id="IPR051720">
    <property type="entry name" value="rRNA_MeTrfase/Polyamine_Synth"/>
</dbReference>
<dbReference type="InterPro" id="IPR029063">
    <property type="entry name" value="SAM-dependent_MTases_sf"/>
</dbReference>
<dbReference type="InterPro" id="IPR007848">
    <property type="entry name" value="Small_mtfrase_dom"/>
</dbReference>
<dbReference type="PANTHER" id="PTHR23290">
    <property type="entry name" value="RRNA N6-ADENOSINE-METHYLTRANSFERASE METTL5"/>
    <property type="match status" value="1"/>
</dbReference>
<dbReference type="PANTHER" id="PTHR23290:SF0">
    <property type="entry name" value="RRNA N6-ADENOSINE-METHYLTRANSFERASE METTL5"/>
    <property type="match status" value="1"/>
</dbReference>
<dbReference type="Pfam" id="PF05175">
    <property type="entry name" value="MTS"/>
    <property type="match status" value="1"/>
</dbReference>
<dbReference type="SUPFAM" id="SSF53335">
    <property type="entry name" value="S-adenosyl-L-methionine-dependent methyltransferases"/>
    <property type="match status" value="1"/>
</dbReference>
<dbReference type="PROSITE" id="PS00092">
    <property type="entry name" value="N6_MTASE"/>
    <property type="match status" value="1"/>
</dbReference>
<sequence>MPDKKTLWMLNELEGFEKPKIKLEQYATSSELAVSMMEMIDETIGFEGKKLIDIGCGCGMLMTTAATMYELETVLGVDIDDEALKICSRNLETAEVQDRCELLQADILDPESDLPRGTFDVAVINPPFGTKNNAGIDMQFVQIGLQMVRPGGSVFSLHKSSTRDYILKNAKKWDGVGAECCAEMRWQLPATYKFHKQKAVDIAVDLIHFKKLDS</sequence>
<gene>
    <name evidence="3 6" type="primary">metl-5</name>
    <name evidence="6" type="ORF">C38D4.9</name>
</gene>